<reference key="1">
    <citation type="journal article" date="2003" name="FEBS Lett.">
        <title>Seven evolutionarily conserved human rhodopsin G protein-coupled receptors lacking close relatives.</title>
        <authorList>
            <person name="Fredriksson R."/>
            <person name="Hoeglund P.J."/>
            <person name="Gloriam D.E.I."/>
            <person name="Lagerstroem M.C."/>
            <person name="Schioeth H.B."/>
        </authorList>
    </citation>
    <scope>NUCLEOTIDE SEQUENCE [MRNA]</scope>
</reference>
<proteinExistence type="evidence at transcript level"/>
<evidence type="ECO:0000255" key="1"/>
<evidence type="ECO:0000255" key="2">
    <source>
        <dbReference type="PROSITE-ProRule" id="PRU00521"/>
    </source>
</evidence>
<gene>
    <name type="primary">Gpr142</name>
</gene>
<comment type="function">
    <text>Orphan receptor.</text>
</comment>
<comment type="subcellular location">
    <subcellularLocation>
        <location>Cell membrane</location>
        <topology>Multi-pass membrane protein</topology>
    </subcellularLocation>
</comment>
<comment type="similarity">
    <text evidence="2">Belongs to the G-protein coupled receptor 1 family.</text>
</comment>
<feature type="chain" id="PRO_0000069621" description="Probable G-protein coupled receptor 142">
    <location>
        <begin position="1"/>
        <end position="365"/>
    </location>
</feature>
<feature type="topological domain" description="Extracellular" evidence="1">
    <location>
        <begin position="1"/>
        <end position="66"/>
    </location>
</feature>
<feature type="transmembrane region" description="Helical; Name=1" evidence="1">
    <location>
        <begin position="67"/>
        <end position="87"/>
    </location>
</feature>
<feature type="topological domain" description="Cytoplasmic" evidence="1">
    <location>
        <begin position="88"/>
        <end position="102"/>
    </location>
</feature>
<feature type="transmembrane region" description="Helical; Name=2" evidence="1">
    <location>
        <begin position="103"/>
        <end position="123"/>
    </location>
</feature>
<feature type="topological domain" description="Extracellular" evidence="1">
    <location>
        <begin position="124"/>
        <end position="140"/>
    </location>
</feature>
<feature type="transmembrane region" description="Helical; Name=3" evidence="1">
    <location>
        <begin position="141"/>
        <end position="161"/>
    </location>
</feature>
<feature type="topological domain" description="Cytoplasmic" evidence="1">
    <location>
        <begin position="162"/>
        <end position="185"/>
    </location>
</feature>
<feature type="transmembrane region" description="Helical; Name=4" evidence="1">
    <location>
        <begin position="186"/>
        <end position="206"/>
    </location>
</feature>
<feature type="topological domain" description="Extracellular" evidence="1">
    <location>
        <begin position="207"/>
        <end position="224"/>
    </location>
</feature>
<feature type="transmembrane region" description="Helical; Name=5" evidence="1">
    <location>
        <begin position="225"/>
        <end position="245"/>
    </location>
</feature>
<feature type="topological domain" description="Cytoplasmic" evidence="1">
    <location>
        <begin position="246"/>
        <end position="264"/>
    </location>
</feature>
<feature type="transmembrane region" description="Helical; Name=6" evidence="1">
    <location>
        <begin position="265"/>
        <end position="285"/>
    </location>
</feature>
<feature type="topological domain" description="Extracellular" evidence="1">
    <location>
        <begin position="286"/>
        <end position="304"/>
    </location>
</feature>
<feature type="transmembrane region" description="Helical; Name=7" evidence="1">
    <location>
        <begin position="305"/>
        <end position="325"/>
    </location>
</feature>
<feature type="topological domain" description="Cytoplasmic" evidence="1">
    <location>
        <begin position="326"/>
        <end position="365"/>
    </location>
</feature>
<feature type="glycosylation site" description="N-linked (GlcNAc...) asparagine" evidence="1">
    <location>
        <position position="44"/>
    </location>
</feature>
<sequence length="365" mass="40758">MHLNSNPNSYICDAYQHADLLWSLSPHVLTKAVQPQVTLLPTVNGSNPRYDGVDGHWPESPERSPCVAGIIPVIYYSVLLSLGLPVALARLAARTRKPSYHYLLALTASDIVTQVIIVFVGFLLQGAVLARQVPQAVVRTANILEFAANHASVWIAVLFTVDRYNALCRPLRHRATSSPGRTHRAIAAVIGVTLLTGIPFYWWLDVWRDADPPSTMDKLLKWAHCLIVYFIPCNVFLVTNSAIILRLRKRGQRGLRPLVSKSTAILLGVTSLFALLWAPRIIVMLYHLYVAPVHRDWRVHLALDIANMLAMLNTEVNFGLYCFISKTFRATVRQVICDVHMACALKSQPKQTVVELMLKSVGTEL</sequence>
<accession>Q7TQN9</accession>
<name>GP142_MOUSE</name>
<dbReference type="EMBL" id="AY288428">
    <property type="protein sequence ID" value="AAP72137.1"/>
    <property type="molecule type" value="mRNA"/>
</dbReference>
<dbReference type="CCDS" id="CCDS25611.1"/>
<dbReference type="RefSeq" id="NP_861414.1">
    <property type="nucleotide sequence ID" value="NM_181749.1"/>
</dbReference>
<dbReference type="SMR" id="Q7TQN9"/>
<dbReference type="FunCoup" id="Q7TQN9">
    <property type="interactions" value="351"/>
</dbReference>
<dbReference type="STRING" id="10090.ENSMUSP00000102194"/>
<dbReference type="BindingDB" id="Q7TQN9"/>
<dbReference type="ChEMBL" id="CHEMBL2069162"/>
<dbReference type="GlyCosmos" id="Q7TQN9">
    <property type="glycosylation" value="1 site, No reported glycans"/>
</dbReference>
<dbReference type="GlyGen" id="Q7TQN9">
    <property type="glycosylation" value="1 site"/>
</dbReference>
<dbReference type="PhosphoSitePlus" id="Q7TQN9"/>
<dbReference type="PaxDb" id="10090-ENSMUSP00000102194"/>
<dbReference type="ProteomicsDB" id="271258"/>
<dbReference type="Antibodypedia" id="51646">
    <property type="antibodies" value="178 antibodies from 29 providers"/>
</dbReference>
<dbReference type="DNASU" id="217302"/>
<dbReference type="Ensembl" id="ENSMUST00000045319.9">
    <property type="protein sequence ID" value="ENSMUSP00000045029.3"/>
    <property type="gene ID" value="ENSMUSG00000034677.10"/>
</dbReference>
<dbReference type="GeneID" id="217302"/>
<dbReference type="KEGG" id="mmu:217302"/>
<dbReference type="UCSC" id="uc007mfu.1">
    <property type="organism name" value="mouse"/>
</dbReference>
<dbReference type="AGR" id="MGI:2668437"/>
<dbReference type="CTD" id="350383"/>
<dbReference type="MGI" id="MGI:2668437">
    <property type="gene designation" value="Gpr142"/>
</dbReference>
<dbReference type="VEuPathDB" id="HostDB:ENSMUSG00000034677"/>
<dbReference type="eggNOG" id="KOG3656">
    <property type="taxonomic scope" value="Eukaryota"/>
</dbReference>
<dbReference type="GeneTree" id="ENSGT00940000160948"/>
<dbReference type="InParanoid" id="Q7TQN9"/>
<dbReference type="OrthoDB" id="5864054at2759"/>
<dbReference type="PhylomeDB" id="Q7TQN9"/>
<dbReference type="BioGRID-ORCS" id="217302">
    <property type="hits" value="3 hits in 77 CRISPR screens"/>
</dbReference>
<dbReference type="PRO" id="PR:Q7TQN9"/>
<dbReference type="Proteomes" id="UP000000589">
    <property type="component" value="Chromosome 11"/>
</dbReference>
<dbReference type="RNAct" id="Q7TQN9">
    <property type="molecule type" value="protein"/>
</dbReference>
<dbReference type="Bgee" id="ENSMUSG00000034677">
    <property type="expression patterns" value="Expressed in islet of Langerhans and 28 other cell types or tissues"/>
</dbReference>
<dbReference type="ExpressionAtlas" id="Q7TQN9">
    <property type="expression patterns" value="baseline and differential"/>
</dbReference>
<dbReference type="GO" id="GO:0016020">
    <property type="term" value="C:membrane"/>
    <property type="evidence" value="ECO:0000305"/>
    <property type="project" value="MGI"/>
</dbReference>
<dbReference type="GO" id="GO:0005886">
    <property type="term" value="C:plasma membrane"/>
    <property type="evidence" value="ECO:0007669"/>
    <property type="project" value="UniProtKB-SubCell"/>
</dbReference>
<dbReference type="GO" id="GO:0004930">
    <property type="term" value="F:G protein-coupled receptor activity"/>
    <property type="evidence" value="ECO:0000247"/>
    <property type="project" value="MGI"/>
</dbReference>
<dbReference type="GO" id="GO:0007186">
    <property type="term" value="P:G protein-coupled receptor signaling pathway"/>
    <property type="evidence" value="ECO:0000247"/>
    <property type="project" value="MGI"/>
</dbReference>
<dbReference type="FunFam" id="1.20.1070.10:FF:000126">
    <property type="entry name" value="Probable G-protein coupled receptor 139"/>
    <property type="match status" value="1"/>
</dbReference>
<dbReference type="Gene3D" id="1.20.1070.10">
    <property type="entry name" value="Rhodopsin 7-helix transmembrane proteins"/>
    <property type="match status" value="1"/>
</dbReference>
<dbReference type="InterPro" id="IPR000276">
    <property type="entry name" value="GPCR_Rhodpsn"/>
</dbReference>
<dbReference type="InterPro" id="IPR017452">
    <property type="entry name" value="GPCR_Rhodpsn_7TM"/>
</dbReference>
<dbReference type="InterPro" id="IPR052477">
    <property type="entry name" value="Orphan_GPCR1"/>
</dbReference>
<dbReference type="PANTHER" id="PTHR46272:SF1">
    <property type="entry name" value="G-PROTEIN COUPLED RECEPTOR 142-RELATED"/>
    <property type="match status" value="1"/>
</dbReference>
<dbReference type="PANTHER" id="PTHR46272">
    <property type="entry name" value="G_PROTEIN_RECEP_F1_2 DOMAIN-CONTAINING PROTEIN"/>
    <property type="match status" value="1"/>
</dbReference>
<dbReference type="Pfam" id="PF00001">
    <property type="entry name" value="7tm_1"/>
    <property type="match status" value="1"/>
</dbReference>
<dbReference type="PRINTS" id="PR00237">
    <property type="entry name" value="GPCRRHODOPSN"/>
</dbReference>
<dbReference type="SUPFAM" id="SSF81321">
    <property type="entry name" value="Family A G protein-coupled receptor-like"/>
    <property type="match status" value="1"/>
</dbReference>
<dbReference type="PROSITE" id="PS00237">
    <property type="entry name" value="G_PROTEIN_RECEP_F1_1"/>
    <property type="match status" value="1"/>
</dbReference>
<dbReference type="PROSITE" id="PS50262">
    <property type="entry name" value="G_PROTEIN_RECEP_F1_2"/>
    <property type="match status" value="1"/>
</dbReference>
<organism>
    <name type="scientific">Mus musculus</name>
    <name type="common">Mouse</name>
    <dbReference type="NCBI Taxonomy" id="10090"/>
    <lineage>
        <taxon>Eukaryota</taxon>
        <taxon>Metazoa</taxon>
        <taxon>Chordata</taxon>
        <taxon>Craniata</taxon>
        <taxon>Vertebrata</taxon>
        <taxon>Euteleostomi</taxon>
        <taxon>Mammalia</taxon>
        <taxon>Eutheria</taxon>
        <taxon>Euarchontoglires</taxon>
        <taxon>Glires</taxon>
        <taxon>Rodentia</taxon>
        <taxon>Myomorpha</taxon>
        <taxon>Muroidea</taxon>
        <taxon>Muridae</taxon>
        <taxon>Murinae</taxon>
        <taxon>Mus</taxon>
        <taxon>Mus</taxon>
    </lineage>
</organism>
<protein>
    <recommendedName>
        <fullName>Probable G-protein coupled receptor 142</fullName>
    </recommendedName>
</protein>
<keyword id="KW-1003">Cell membrane</keyword>
<keyword id="KW-0297">G-protein coupled receptor</keyword>
<keyword id="KW-0325">Glycoprotein</keyword>
<keyword id="KW-0472">Membrane</keyword>
<keyword id="KW-0675">Receptor</keyword>
<keyword id="KW-1185">Reference proteome</keyword>
<keyword id="KW-0807">Transducer</keyword>
<keyword id="KW-0812">Transmembrane</keyword>
<keyword id="KW-1133">Transmembrane helix</keyword>